<proteinExistence type="inferred from homology"/>
<evidence type="ECO:0000255" key="1">
    <source>
        <dbReference type="HAMAP-Rule" id="MF_01346"/>
    </source>
</evidence>
<accession>A4VVK1</accession>
<sequence>MINAQEISALLKQQIEGFQPDFDYTETGVVTYIGDGIARAQGLDNAMSGELLVFENGTIGMAQNLETNDVGIIILGQFTDIREGSVVRRTGKIMEVPVGSALIGRVINPLGQPVDGLGEIRTSKTRPIEYPAPGVMQRKSVNEPLQTGLKAIDALVPIGRGQRELIIGDRQTGKTSVAIDAILNQKGQDMICIYVAIGQKESTVRTQVETLRQYGALDYTIVVTASASQPSPLLFLAPYAGVAMAEEFMYEGKHVLIVYDDLSKQAVAYRELSLLLRRPPGREAYPGDVFYLHSRLLERSAKVSDELGGGSITALPFIETQAGDISAYIATNVISITDGQIFLKDDLFNSGIRPAIDAGSSVSRVGGSAQIKAMKKVAGTLRIDLASYRELEAFTQFGSDLDAATQAKLNRGRRTVEVLKQPLHKPLPVEKQVLILYALTNGFLDSVPIDDILAFEEELYAYFDLHYDGLLDVIRTTKDLPDTDELNAAIQAFKDQSVFK</sequence>
<keyword id="KW-0066">ATP synthesis</keyword>
<keyword id="KW-0067">ATP-binding</keyword>
<keyword id="KW-1003">Cell membrane</keyword>
<keyword id="KW-0139">CF(1)</keyword>
<keyword id="KW-0375">Hydrogen ion transport</keyword>
<keyword id="KW-0406">Ion transport</keyword>
<keyword id="KW-0472">Membrane</keyword>
<keyword id="KW-0547">Nucleotide-binding</keyword>
<keyword id="KW-1278">Translocase</keyword>
<keyword id="KW-0813">Transport</keyword>
<comment type="function">
    <text evidence="1">Produces ATP from ADP in the presence of a proton gradient across the membrane. The alpha chain is a regulatory subunit.</text>
</comment>
<comment type="catalytic activity">
    <reaction evidence="1">
        <text>ATP + H2O + 4 H(+)(in) = ADP + phosphate + 5 H(+)(out)</text>
        <dbReference type="Rhea" id="RHEA:57720"/>
        <dbReference type="ChEBI" id="CHEBI:15377"/>
        <dbReference type="ChEBI" id="CHEBI:15378"/>
        <dbReference type="ChEBI" id="CHEBI:30616"/>
        <dbReference type="ChEBI" id="CHEBI:43474"/>
        <dbReference type="ChEBI" id="CHEBI:456216"/>
        <dbReference type="EC" id="7.1.2.2"/>
    </reaction>
</comment>
<comment type="subunit">
    <text evidence="1">F-type ATPases have 2 components, CF(1) - the catalytic core - and CF(0) - the membrane proton channel. CF(1) has five subunits: alpha(3), beta(3), gamma(1), delta(1), epsilon(1). CF(0) has three main subunits: a(1), b(2) and c(9-12). The alpha and beta chains form an alternating ring which encloses part of the gamma chain. CF(1) is attached to CF(0) by a central stalk formed by the gamma and epsilon chains, while a peripheral stalk is formed by the delta and b chains.</text>
</comment>
<comment type="subcellular location">
    <subcellularLocation>
        <location evidence="1">Cell membrane</location>
        <topology evidence="1">Peripheral membrane protein</topology>
    </subcellularLocation>
</comment>
<comment type="similarity">
    <text evidence="1">Belongs to the ATPase alpha/beta chains family.</text>
</comment>
<protein>
    <recommendedName>
        <fullName evidence="1">ATP synthase subunit alpha</fullName>
        <ecNumber evidence="1">7.1.2.2</ecNumber>
    </recommendedName>
    <alternativeName>
        <fullName evidence="1">ATP synthase F1 sector subunit alpha</fullName>
    </alternativeName>
    <alternativeName>
        <fullName evidence="1">F-ATPase subunit alpha</fullName>
    </alternativeName>
</protein>
<organism>
    <name type="scientific">Streptococcus suis (strain 05ZYH33)</name>
    <dbReference type="NCBI Taxonomy" id="391295"/>
    <lineage>
        <taxon>Bacteria</taxon>
        <taxon>Bacillati</taxon>
        <taxon>Bacillota</taxon>
        <taxon>Bacilli</taxon>
        <taxon>Lactobacillales</taxon>
        <taxon>Streptococcaceae</taxon>
        <taxon>Streptococcus</taxon>
    </lineage>
</organism>
<dbReference type="EC" id="7.1.2.2" evidence="1"/>
<dbReference type="EMBL" id="CP000407">
    <property type="protein sequence ID" value="ABP90140.1"/>
    <property type="molecule type" value="Genomic_DNA"/>
</dbReference>
<dbReference type="SMR" id="A4VVK1"/>
<dbReference type="STRING" id="391295.SSU05_1174"/>
<dbReference type="KEGG" id="ssu:SSU05_1174"/>
<dbReference type="eggNOG" id="COG0056">
    <property type="taxonomic scope" value="Bacteria"/>
</dbReference>
<dbReference type="HOGENOM" id="CLU_010091_2_1_9"/>
<dbReference type="GO" id="GO:0005886">
    <property type="term" value="C:plasma membrane"/>
    <property type="evidence" value="ECO:0007669"/>
    <property type="project" value="UniProtKB-SubCell"/>
</dbReference>
<dbReference type="GO" id="GO:0045259">
    <property type="term" value="C:proton-transporting ATP synthase complex"/>
    <property type="evidence" value="ECO:0007669"/>
    <property type="project" value="UniProtKB-KW"/>
</dbReference>
<dbReference type="GO" id="GO:0043531">
    <property type="term" value="F:ADP binding"/>
    <property type="evidence" value="ECO:0007669"/>
    <property type="project" value="TreeGrafter"/>
</dbReference>
<dbReference type="GO" id="GO:0005524">
    <property type="term" value="F:ATP binding"/>
    <property type="evidence" value="ECO:0007669"/>
    <property type="project" value="UniProtKB-UniRule"/>
</dbReference>
<dbReference type="GO" id="GO:0046933">
    <property type="term" value="F:proton-transporting ATP synthase activity, rotational mechanism"/>
    <property type="evidence" value="ECO:0007669"/>
    <property type="project" value="UniProtKB-UniRule"/>
</dbReference>
<dbReference type="CDD" id="cd18113">
    <property type="entry name" value="ATP-synt_F1_alpha_C"/>
    <property type="match status" value="1"/>
</dbReference>
<dbReference type="CDD" id="cd18116">
    <property type="entry name" value="ATP-synt_F1_alpha_N"/>
    <property type="match status" value="1"/>
</dbReference>
<dbReference type="CDD" id="cd01132">
    <property type="entry name" value="F1-ATPase_alpha_CD"/>
    <property type="match status" value="1"/>
</dbReference>
<dbReference type="FunFam" id="1.20.150.20:FF:000001">
    <property type="entry name" value="ATP synthase subunit alpha"/>
    <property type="match status" value="1"/>
</dbReference>
<dbReference type="FunFam" id="2.40.30.20:FF:000001">
    <property type="entry name" value="ATP synthase subunit alpha"/>
    <property type="match status" value="1"/>
</dbReference>
<dbReference type="FunFam" id="3.40.50.300:FF:000002">
    <property type="entry name" value="ATP synthase subunit alpha"/>
    <property type="match status" value="1"/>
</dbReference>
<dbReference type="Gene3D" id="2.40.30.20">
    <property type="match status" value="1"/>
</dbReference>
<dbReference type="Gene3D" id="1.20.150.20">
    <property type="entry name" value="ATP synthase alpha/beta chain, C-terminal domain"/>
    <property type="match status" value="1"/>
</dbReference>
<dbReference type="Gene3D" id="3.40.50.300">
    <property type="entry name" value="P-loop containing nucleotide triphosphate hydrolases"/>
    <property type="match status" value="1"/>
</dbReference>
<dbReference type="HAMAP" id="MF_01346">
    <property type="entry name" value="ATP_synth_alpha_bact"/>
    <property type="match status" value="1"/>
</dbReference>
<dbReference type="InterPro" id="IPR023366">
    <property type="entry name" value="ATP_synth_asu-like_sf"/>
</dbReference>
<dbReference type="InterPro" id="IPR000793">
    <property type="entry name" value="ATP_synth_asu_C"/>
</dbReference>
<dbReference type="InterPro" id="IPR038376">
    <property type="entry name" value="ATP_synth_asu_C_sf"/>
</dbReference>
<dbReference type="InterPro" id="IPR033732">
    <property type="entry name" value="ATP_synth_F1_a_nt-bd_dom"/>
</dbReference>
<dbReference type="InterPro" id="IPR005294">
    <property type="entry name" value="ATP_synth_F1_asu"/>
</dbReference>
<dbReference type="InterPro" id="IPR004100">
    <property type="entry name" value="ATPase_F1/V1/A1_a/bsu_N"/>
</dbReference>
<dbReference type="InterPro" id="IPR036121">
    <property type="entry name" value="ATPase_F1/V1/A1_a/bsu_N_sf"/>
</dbReference>
<dbReference type="InterPro" id="IPR000194">
    <property type="entry name" value="ATPase_F1/V1/A1_a/bsu_nucl-bd"/>
</dbReference>
<dbReference type="InterPro" id="IPR027417">
    <property type="entry name" value="P-loop_NTPase"/>
</dbReference>
<dbReference type="NCBIfam" id="TIGR00962">
    <property type="entry name" value="atpA"/>
    <property type="match status" value="1"/>
</dbReference>
<dbReference type="NCBIfam" id="NF009884">
    <property type="entry name" value="PRK13343.1"/>
    <property type="match status" value="1"/>
</dbReference>
<dbReference type="PANTHER" id="PTHR48082">
    <property type="entry name" value="ATP SYNTHASE SUBUNIT ALPHA, MITOCHONDRIAL"/>
    <property type="match status" value="1"/>
</dbReference>
<dbReference type="PANTHER" id="PTHR48082:SF2">
    <property type="entry name" value="ATP SYNTHASE SUBUNIT ALPHA, MITOCHONDRIAL"/>
    <property type="match status" value="1"/>
</dbReference>
<dbReference type="Pfam" id="PF00006">
    <property type="entry name" value="ATP-synt_ab"/>
    <property type="match status" value="1"/>
</dbReference>
<dbReference type="Pfam" id="PF00306">
    <property type="entry name" value="ATP-synt_ab_C"/>
    <property type="match status" value="1"/>
</dbReference>
<dbReference type="Pfam" id="PF02874">
    <property type="entry name" value="ATP-synt_ab_N"/>
    <property type="match status" value="1"/>
</dbReference>
<dbReference type="PIRSF" id="PIRSF039088">
    <property type="entry name" value="F_ATPase_subunit_alpha"/>
    <property type="match status" value="1"/>
</dbReference>
<dbReference type="SUPFAM" id="SSF47917">
    <property type="entry name" value="C-terminal domain of alpha and beta subunits of F1 ATP synthase"/>
    <property type="match status" value="1"/>
</dbReference>
<dbReference type="SUPFAM" id="SSF50615">
    <property type="entry name" value="N-terminal domain of alpha and beta subunits of F1 ATP synthase"/>
    <property type="match status" value="1"/>
</dbReference>
<dbReference type="SUPFAM" id="SSF52540">
    <property type="entry name" value="P-loop containing nucleoside triphosphate hydrolases"/>
    <property type="match status" value="1"/>
</dbReference>
<name>ATPA_STRSY</name>
<feature type="chain" id="PRO_0000339060" description="ATP synthase subunit alpha">
    <location>
        <begin position="1"/>
        <end position="500"/>
    </location>
</feature>
<feature type="binding site" evidence="1">
    <location>
        <begin position="168"/>
        <end position="175"/>
    </location>
    <ligand>
        <name>ATP</name>
        <dbReference type="ChEBI" id="CHEBI:30616"/>
    </ligand>
</feature>
<feature type="site" description="Required for activity" evidence="1">
    <location>
        <position position="361"/>
    </location>
</feature>
<gene>
    <name evidence="1" type="primary">atpA</name>
    <name type="ordered locus">SSU05_1174</name>
</gene>
<reference key="1">
    <citation type="journal article" date="2007" name="PLoS ONE">
        <title>A glimpse of streptococcal toxic shock syndrome from comparative genomics of S. suis 2 Chinese isolates.</title>
        <authorList>
            <person name="Chen C."/>
            <person name="Tang J."/>
            <person name="Dong W."/>
            <person name="Wang C."/>
            <person name="Feng Y."/>
            <person name="Wang J."/>
            <person name="Zheng F."/>
            <person name="Pan X."/>
            <person name="Liu D."/>
            <person name="Li M."/>
            <person name="Song Y."/>
            <person name="Zhu X."/>
            <person name="Sun H."/>
            <person name="Feng T."/>
            <person name="Guo Z."/>
            <person name="Ju A."/>
            <person name="Ge J."/>
            <person name="Dong Y."/>
            <person name="Sun W."/>
            <person name="Jiang Y."/>
            <person name="Wang J."/>
            <person name="Yan J."/>
            <person name="Yang H."/>
            <person name="Wang X."/>
            <person name="Gao G.F."/>
            <person name="Yang R."/>
            <person name="Wang J."/>
            <person name="Yu J."/>
        </authorList>
    </citation>
    <scope>NUCLEOTIDE SEQUENCE [LARGE SCALE GENOMIC DNA]</scope>
    <source>
        <strain>05ZYH33</strain>
    </source>
</reference>